<evidence type="ECO:0000250" key="1">
    <source>
        <dbReference type="UniProtKB" id="Q02614"/>
    </source>
</evidence>
<evidence type="ECO:0000255" key="2"/>
<evidence type="ECO:0000256" key="3">
    <source>
        <dbReference type="SAM" id="MobiDB-lite"/>
    </source>
</evidence>
<evidence type="ECO:0000269" key="4">
    <source>
    </source>
</evidence>
<evidence type="ECO:0000269" key="5">
    <source>
    </source>
</evidence>
<evidence type="ECO:0000269" key="6">
    <source>
    </source>
</evidence>
<evidence type="ECO:0000303" key="7">
    <source>
    </source>
</evidence>
<evidence type="ECO:0000303" key="8">
    <source>
    </source>
</evidence>
<evidence type="ECO:0000305" key="9"/>
<evidence type="ECO:0000312" key="10">
    <source>
        <dbReference type="EMBL" id="AAF17221.1"/>
    </source>
</evidence>
<evidence type="ECO:0000312" key="11">
    <source>
        <dbReference type="EMBL" id="AAH07592.1"/>
    </source>
</evidence>
<evidence type="ECO:0000312" key="12">
    <source>
        <dbReference type="EMBL" id="AAH13409.2"/>
    </source>
</evidence>
<evidence type="ECO:0000312" key="13">
    <source>
        <dbReference type="EMBL" id="AAH30233.1"/>
    </source>
</evidence>
<evidence type="ECO:0000312" key="14">
    <source>
        <dbReference type="EMBL" id="AAH63793.1"/>
    </source>
</evidence>
<evidence type="ECO:0000312" key="15">
    <source>
        <dbReference type="EMBL" id="AAL47177.1"/>
    </source>
</evidence>
<evidence type="ECO:0000312" key="16">
    <source>
        <dbReference type="EMBL" id="AAL92491.1"/>
    </source>
</evidence>
<evidence type="ECO:0000312" key="17">
    <source>
        <dbReference type="EMBL" id="BAC04514.1"/>
    </source>
</evidence>
<evidence type="ECO:0007744" key="18">
    <source>
    </source>
</evidence>
<evidence type="ECO:0007744" key="19">
    <source>
    </source>
</evidence>
<evidence type="ECO:0007744" key="20">
    <source>
    </source>
</evidence>
<evidence type="ECO:0007744" key="21">
    <source>
    </source>
</evidence>
<evidence type="ECO:0007744" key="22">
    <source>
    </source>
</evidence>
<evidence type="ECO:0007744" key="23">
    <source>
    </source>
</evidence>
<evidence type="ECO:0007744" key="24">
    <source>
    </source>
</evidence>
<evidence type="ECO:0007744" key="25">
    <source>
    </source>
</evidence>
<name>S30BP_HUMAN</name>
<feature type="chain" id="PRO_0000245791" description="SAP30-binding protein">
    <location>
        <begin position="1"/>
        <end position="308"/>
    </location>
</feature>
<feature type="region of interest" description="Disordered" evidence="3">
    <location>
        <begin position="15"/>
        <end position="101"/>
    </location>
</feature>
<feature type="compositionally biased region" description="Acidic residues" evidence="3">
    <location>
        <begin position="16"/>
        <end position="26"/>
    </location>
</feature>
<feature type="compositionally biased region" description="Acidic residues" evidence="3">
    <location>
        <begin position="57"/>
        <end position="78"/>
    </location>
</feature>
<feature type="compositionally biased region" description="Basic and acidic residues" evidence="3">
    <location>
        <begin position="79"/>
        <end position="99"/>
    </location>
</feature>
<feature type="modified residue" description="Phosphoserine" evidence="18 19">
    <location>
        <position position="18"/>
    </location>
</feature>
<feature type="modified residue" description="Phosphoserine" evidence="18 19">
    <location>
        <position position="22"/>
    </location>
</feature>
<feature type="modified residue" description="Phosphoserine" evidence="18 19 20 21 22">
    <location>
        <position position="43"/>
    </location>
</feature>
<feature type="modified residue" description="Phosphoserine" evidence="19 22">
    <location>
        <position position="52"/>
    </location>
</feature>
<feature type="modified residue" description="Phosphoserine" evidence="20 22">
    <location>
        <position position="113"/>
    </location>
</feature>
<feature type="cross-link" description="Glycyl lysine isopeptide (Lys-Gly) (interchain with G-Cter in SUMO2)" evidence="25">
    <location>
        <position position="95"/>
    </location>
</feature>
<feature type="cross-link" description="Glycyl lysine isopeptide (Lys-Gly) (interchain with G-Cter in SUMO2)" evidence="23 25">
    <location>
        <position position="220"/>
    </location>
</feature>
<feature type="cross-link" description="Glycyl lysine isopeptide (Lys-Gly) (interchain with G-Cter in SUMO2)" evidence="23 24 25">
    <location>
        <position position="304"/>
    </location>
</feature>
<feature type="cross-link" description="Glycyl lysine isopeptide (Lys-Gly) (interchain with G-Cter in SUMO2)" evidence="25">
    <location>
        <position position="305"/>
    </location>
</feature>
<feature type="splice variant" id="VSP_052091" description="In isoform 2." evidence="7">
    <location>
        <begin position="73"/>
        <end position="88"/>
    </location>
</feature>
<feature type="sequence conflict" description="In Ref. 3; AAM10497." evidence="9" ref="3">
    <original>A</original>
    <variation>G</variation>
    <location>
        <position position="2"/>
    </location>
</feature>
<feature type="sequence conflict" description="In Ref. 3; AAM10497." evidence="9" ref="3">
    <original>KK</original>
    <variation>SS</variation>
    <location>
        <begin position="4"/>
        <end position="5"/>
    </location>
</feature>
<feature type="sequence conflict" description="In Ref. 3; AAM10497." evidence="9" ref="3">
    <original>D</original>
    <variation>H</variation>
    <location>
        <position position="44"/>
    </location>
</feature>
<feature type="sequence conflict" description="In Ref. 7; AAH13409." evidence="9" ref="7">
    <original>D</original>
    <variation>N</variation>
    <location>
        <position position="89"/>
    </location>
</feature>
<reference evidence="9 15" key="1">
    <citation type="journal article" date="2004" name="J. Biochem.">
        <title>HTRP -- an immediate-early gene product induced by HSV1 infection in human embryo fibroblasts, is involved in cellular co-repressors.</title>
        <authorList>
            <person name="Li J.-F."/>
            <person name="Liu L.-D."/>
            <person name="Ma S.-H."/>
            <person name="Che Y.-C."/>
            <person name="Wang L.-C."/>
            <person name="Dong C.-H."/>
            <person name="Zhao H.-L."/>
            <person name="Liao Y."/>
            <person name="Li Q.-H."/>
        </authorList>
    </citation>
    <scope>NUCLEOTIDE SEQUENCE [MRNA] (ISOFORM 1)</scope>
    <scope>INTERACTION WITH SAP30</scope>
    <scope>SUBCELLULAR LOCATION</scope>
    <scope>INDUCTION</scope>
</reference>
<reference evidence="9 16" key="2">
    <citation type="submission" date="2002-03" db="EMBL/GenBank/DDBJ databases">
        <title>Cloning, sequencing, expression and localization in chromosome of HCNGP gene.</title>
        <authorList>
            <person name="Gou D."/>
            <person name="Jiang D."/>
            <person name="Li W."/>
        </authorList>
    </citation>
    <scope>NUCLEOTIDE SEQUENCE [MRNA] (ISOFORM 1)</scope>
</reference>
<reference evidence="9 16" key="3">
    <citation type="submission" date="2002-04" db="EMBL/GenBank/DDBJ databases">
        <title>Cloning and characterization of a novel human cDNA homology to murine HCNGP mRNA.</title>
        <authorList>
            <person name="Ding J.B."/>
            <person name="Yu L."/>
            <person name="Bi A.D."/>
            <person name="Fu Q."/>
            <person name="Fu S.N."/>
            <person name="Zhao S.Y."/>
        </authorList>
    </citation>
    <scope>NUCLEOTIDE SEQUENCE [MRNA] (ISOFORM 1)</scope>
</reference>
<reference evidence="9 10" key="4">
    <citation type="journal article" date="2000" name="Proc. Natl. Acad. Sci. U.S.A.">
        <title>Gene expression profiling in the human hypothalamus-pituitary-adrenal axis and full-length cDNA cloning.</title>
        <authorList>
            <person name="Hu R.-M."/>
            <person name="Han Z.-G."/>
            <person name="Song H.-D."/>
            <person name="Peng Y.-D."/>
            <person name="Huang Q.-H."/>
            <person name="Ren S.-X."/>
            <person name="Gu Y.-J."/>
            <person name="Huang C.-H."/>
            <person name="Li Y.-B."/>
            <person name="Jiang C.-L."/>
            <person name="Fu G."/>
            <person name="Zhang Q.-H."/>
            <person name="Gu B.-W."/>
            <person name="Dai M."/>
            <person name="Mao Y.-F."/>
            <person name="Gao G.-F."/>
            <person name="Rong R."/>
            <person name="Ye M."/>
            <person name="Zhou J."/>
            <person name="Xu S.-H."/>
            <person name="Gu J."/>
            <person name="Shi J.-X."/>
            <person name="Jin W.-R."/>
            <person name="Zhang C.-K."/>
            <person name="Wu T.-M."/>
            <person name="Huang G.-Y."/>
            <person name="Chen Z."/>
            <person name="Chen M.-D."/>
            <person name="Chen J.-L."/>
        </authorList>
    </citation>
    <scope>NUCLEOTIDE SEQUENCE [LARGE SCALE MRNA] (ISOFORM 1)</scope>
    <source>
        <tissue evidence="10">Adrenal gland</tissue>
    </source>
</reference>
<reference evidence="9 17" key="5">
    <citation type="journal article" date="2004" name="Nat. Genet.">
        <title>Complete sequencing and characterization of 21,243 full-length human cDNAs.</title>
        <authorList>
            <person name="Ota T."/>
            <person name="Suzuki Y."/>
            <person name="Nishikawa T."/>
            <person name="Otsuki T."/>
            <person name="Sugiyama T."/>
            <person name="Irie R."/>
            <person name="Wakamatsu A."/>
            <person name="Hayashi K."/>
            <person name="Sato H."/>
            <person name="Nagai K."/>
            <person name="Kimura K."/>
            <person name="Makita H."/>
            <person name="Sekine M."/>
            <person name="Obayashi M."/>
            <person name="Nishi T."/>
            <person name="Shibahara T."/>
            <person name="Tanaka T."/>
            <person name="Ishii S."/>
            <person name="Yamamoto J."/>
            <person name="Saito K."/>
            <person name="Kawai Y."/>
            <person name="Isono Y."/>
            <person name="Nakamura Y."/>
            <person name="Nagahari K."/>
            <person name="Murakami K."/>
            <person name="Yasuda T."/>
            <person name="Iwayanagi T."/>
            <person name="Wagatsuma M."/>
            <person name="Shiratori A."/>
            <person name="Sudo H."/>
            <person name="Hosoiri T."/>
            <person name="Kaku Y."/>
            <person name="Kodaira H."/>
            <person name="Kondo H."/>
            <person name="Sugawara M."/>
            <person name="Takahashi M."/>
            <person name="Kanda K."/>
            <person name="Yokoi T."/>
            <person name="Furuya T."/>
            <person name="Kikkawa E."/>
            <person name="Omura Y."/>
            <person name="Abe K."/>
            <person name="Kamihara K."/>
            <person name="Katsuta N."/>
            <person name="Sato K."/>
            <person name="Tanikawa M."/>
            <person name="Yamazaki M."/>
            <person name="Ninomiya K."/>
            <person name="Ishibashi T."/>
            <person name="Yamashita H."/>
            <person name="Murakawa K."/>
            <person name="Fujimori K."/>
            <person name="Tanai H."/>
            <person name="Kimata M."/>
            <person name="Watanabe M."/>
            <person name="Hiraoka S."/>
            <person name="Chiba Y."/>
            <person name="Ishida S."/>
            <person name="Ono Y."/>
            <person name="Takiguchi S."/>
            <person name="Watanabe S."/>
            <person name="Yosida M."/>
            <person name="Hotuta T."/>
            <person name="Kusano J."/>
            <person name="Kanehori K."/>
            <person name="Takahashi-Fujii A."/>
            <person name="Hara H."/>
            <person name="Tanase T.-O."/>
            <person name="Nomura Y."/>
            <person name="Togiya S."/>
            <person name="Komai F."/>
            <person name="Hara R."/>
            <person name="Takeuchi K."/>
            <person name="Arita M."/>
            <person name="Imose N."/>
            <person name="Musashino K."/>
            <person name="Yuuki H."/>
            <person name="Oshima A."/>
            <person name="Sasaki N."/>
            <person name="Aotsuka S."/>
            <person name="Yoshikawa Y."/>
            <person name="Matsunawa H."/>
            <person name="Ichihara T."/>
            <person name="Shiohata N."/>
            <person name="Sano S."/>
            <person name="Moriya S."/>
            <person name="Momiyama H."/>
            <person name="Satoh N."/>
            <person name="Takami S."/>
            <person name="Terashima Y."/>
            <person name="Suzuki O."/>
            <person name="Nakagawa S."/>
            <person name="Senoh A."/>
            <person name="Mizoguchi H."/>
            <person name="Goto Y."/>
            <person name="Shimizu F."/>
            <person name="Wakebe H."/>
            <person name="Hishigaki H."/>
            <person name="Watanabe T."/>
            <person name="Sugiyama A."/>
            <person name="Takemoto M."/>
            <person name="Kawakami B."/>
            <person name="Yamazaki M."/>
            <person name="Watanabe K."/>
            <person name="Kumagai A."/>
            <person name="Itakura S."/>
            <person name="Fukuzumi Y."/>
            <person name="Fujimori Y."/>
            <person name="Komiyama M."/>
            <person name="Tashiro H."/>
            <person name="Tanigami A."/>
            <person name="Fujiwara T."/>
            <person name="Ono T."/>
            <person name="Yamada K."/>
            <person name="Fujii Y."/>
            <person name="Ozaki K."/>
            <person name="Hirao M."/>
            <person name="Ohmori Y."/>
            <person name="Kawabata A."/>
            <person name="Hikiji T."/>
            <person name="Kobatake N."/>
            <person name="Inagaki H."/>
            <person name="Ikema Y."/>
            <person name="Okamoto S."/>
            <person name="Okitani R."/>
            <person name="Kawakami T."/>
            <person name="Noguchi S."/>
            <person name="Itoh T."/>
            <person name="Shigeta K."/>
            <person name="Senba T."/>
            <person name="Matsumura K."/>
            <person name="Nakajima Y."/>
            <person name="Mizuno T."/>
            <person name="Morinaga M."/>
            <person name="Sasaki M."/>
            <person name="Togashi T."/>
            <person name="Oyama M."/>
            <person name="Hata H."/>
            <person name="Watanabe M."/>
            <person name="Komatsu T."/>
            <person name="Mizushima-Sugano J."/>
            <person name="Satoh T."/>
            <person name="Shirai Y."/>
            <person name="Takahashi Y."/>
            <person name="Nakagawa K."/>
            <person name="Okumura K."/>
            <person name="Nagase T."/>
            <person name="Nomura N."/>
            <person name="Kikuchi H."/>
            <person name="Masuho Y."/>
            <person name="Yamashita R."/>
            <person name="Nakai K."/>
            <person name="Yada T."/>
            <person name="Nakamura Y."/>
            <person name="Ohara O."/>
            <person name="Isogai T."/>
            <person name="Sugano S."/>
        </authorList>
    </citation>
    <scope>NUCLEOTIDE SEQUENCE [LARGE SCALE MRNA] (ISOFORMS 1 AND 2)</scope>
    <source>
        <tissue>Placenta</tissue>
        <tissue evidence="17">Tongue</tissue>
    </source>
</reference>
<reference evidence="9 16" key="6">
    <citation type="submission" date="2005-07" db="EMBL/GenBank/DDBJ databases">
        <authorList>
            <person name="Mural R.J."/>
            <person name="Istrail S."/>
            <person name="Sutton G.G."/>
            <person name="Florea L."/>
            <person name="Halpern A.L."/>
            <person name="Mobarry C.M."/>
            <person name="Lippert R."/>
            <person name="Walenz B."/>
            <person name="Shatkay H."/>
            <person name="Dew I."/>
            <person name="Miller J.R."/>
            <person name="Flanigan M.J."/>
            <person name="Edwards N.J."/>
            <person name="Bolanos R."/>
            <person name="Fasulo D."/>
            <person name="Halldorsson B.V."/>
            <person name="Hannenhalli S."/>
            <person name="Turner R."/>
            <person name="Yooseph S."/>
            <person name="Lu F."/>
            <person name="Nusskern D.R."/>
            <person name="Shue B.C."/>
            <person name="Zheng X.H."/>
            <person name="Zhong F."/>
            <person name="Delcher A.L."/>
            <person name="Huson D.H."/>
            <person name="Kravitz S.A."/>
            <person name="Mouchard L."/>
            <person name="Reinert K."/>
            <person name="Remington K.A."/>
            <person name="Clark A.G."/>
            <person name="Waterman M.S."/>
            <person name="Eichler E.E."/>
            <person name="Adams M.D."/>
            <person name="Hunkapiller M.W."/>
            <person name="Myers E.W."/>
            <person name="Venter J.C."/>
        </authorList>
    </citation>
    <scope>NUCLEOTIDE SEQUENCE [LARGE SCALE GENOMIC DNA]</scope>
</reference>
<reference evidence="9 11" key="7">
    <citation type="journal article" date="2004" name="Genome Res.">
        <title>The status, quality, and expansion of the NIH full-length cDNA project: the Mammalian Gene Collection (MGC).</title>
        <authorList>
            <consortium name="The MGC Project Team"/>
        </authorList>
    </citation>
    <scope>NUCLEOTIDE SEQUENCE [LARGE SCALE MRNA] (ISOFORM 1)</scope>
    <source>
        <tissue evidence="12">Muscle</tissue>
        <tissue evidence="13">Pancreas</tissue>
        <tissue evidence="11">Skin</tissue>
        <tissue evidence="14">Uterus</tissue>
    </source>
</reference>
<reference key="8">
    <citation type="journal article" date="2008" name="Proc. Natl. Acad. Sci. U.S.A.">
        <title>A quantitative atlas of mitotic phosphorylation.</title>
        <authorList>
            <person name="Dephoure N."/>
            <person name="Zhou C."/>
            <person name="Villen J."/>
            <person name="Beausoleil S.A."/>
            <person name="Bakalarski C.E."/>
            <person name="Elledge S.J."/>
            <person name="Gygi S.P."/>
        </authorList>
    </citation>
    <scope>PHOSPHORYLATION [LARGE SCALE ANALYSIS] AT SER-18; SER-22 AND SER-43</scope>
    <scope>IDENTIFICATION BY MASS SPECTROMETRY [LARGE SCALE ANALYSIS]</scope>
    <source>
        <tissue>Cervix carcinoma</tissue>
    </source>
</reference>
<reference key="9">
    <citation type="journal article" date="2009" name="Sci. Signal.">
        <title>Quantitative phosphoproteomic analysis of T cell receptor signaling reveals system-wide modulation of protein-protein interactions.</title>
        <authorList>
            <person name="Mayya V."/>
            <person name="Lundgren D.H."/>
            <person name="Hwang S.-I."/>
            <person name="Rezaul K."/>
            <person name="Wu L."/>
            <person name="Eng J.K."/>
            <person name="Rodionov V."/>
            <person name="Han D.K."/>
        </authorList>
    </citation>
    <scope>PHOSPHORYLATION [LARGE SCALE ANALYSIS] AT SER-18; SER-22; SER-43 AND SER-52</scope>
    <scope>IDENTIFICATION BY MASS SPECTROMETRY [LARGE SCALE ANALYSIS]</scope>
    <source>
        <tissue>Leukemic T-cell</tissue>
    </source>
</reference>
<reference key="10">
    <citation type="journal article" date="2010" name="Sci. Signal.">
        <title>Quantitative phosphoproteomics reveals widespread full phosphorylation site occupancy during mitosis.</title>
        <authorList>
            <person name="Olsen J.V."/>
            <person name="Vermeulen M."/>
            <person name="Santamaria A."/>
            <person name="Kumar C."/>
            <person name="Miller M.L."/>
            <person name="Jensen L.J."/>
            <person name="Gnad F."/>
            <person name="Cox J."/>
            <person name="Jensen T.S."/>
            <person name="Nigg E.A."/>
            <person name="Brunak S."/>
            <person name="Mann M."/>
        </authorList>
    </citation>
    <scope>PHOSPHORYLATION [LARGE SCALE ANALYSIS] AT SER-43 AND SER-113</scope>
    <scope>IDENTIFICATION BY MASS SPECTROMETRY [LARGE SCALE ANALYSIS]</scope>
    <source>
        <tissue>Cervix carcinoma</tissue>
    </source>
</reference>
<reference key="11">
    <citation type="journal article" date="2010" name="Virol. Sin.">
        <title>Transcriptional regulation by HSV-1 induced HTRP via acetylation system.</title>
        <authorList>
            <person name="Chen J."/>
            <person name="Li Y.M."/>
            <person name="Li J.F."/>
            <person name="Liu L.D."/>
            <person name="Liao Y."/>
            <person name="Na R.X."/>
            <person name="Wang J.J."/>
            <person name="Wang L.C."/>
            <person name="Li Q.H."/>
        </authorList>
    </citation>
    <scope>FUNCTION</scope>
</reference>
<reference key="12">
    <citation type="journal article" date="2011" name="BMC Syst. Biol.">
        <title>Initial characterization of the human central proteome.</title>
        <authorList>
            <person name="Burkard T.R."/>
            <person name="Planyavsky M."/>
            <person name="Kaupe I."/>
            <person name="Breitwieser F.P."/>
            <person name="Buerckstuemmer T."/>
            <person name="Bennett K.L."/>
            <person name="Superti-Furga G."/>
            <person name="Colinge J."/>
        </authorList>
    </citation>
    <scope>IDENTIFICATION BY MASS SPECTROMETRY [LARGE SCALE ANALYSIS]</scope>
</reference>
<reference key="13">
    <citation type="journal article" date="2011" name="Sci. Signal.">
        <title>System-wide temporal characterization of the proteome and phosphoproteome of human embryonic stem cell differentiation.</title>
        <authorList>
            <person name="Rigbolt K.T."/>
            <person name="Prokhorova T.A."/>
            <person name="Akimov V."/>
            <person name="Henningsen J."/>
            <person name="Johansen P.T."/>
            <person name="Kratchmarova I."/>
            <person name="Kassem M."/>
            <person name="Mann M."/>
            <person name="Olsen J.V."/>
            <person name="Blagoev B."/>
        </authorList>
    </citation>
    <scope>PHOSPHORYLATION [LARGE SCALE ANALYSIS] AT SER-43</scope>
    <scope>IDENTIFICATION BY MASS SPECTROMETRY [LARGE SCALE ANALYSIS]</scope>
</reference>
<reference key="14">
    <citation type="journal article" date="2013" name="J. Proteome Res.">
        <title>Toward a comprehensive characterization of a human cancer cell phosphoproteome.</title>
        <authorList>
            <person name="Zhou H."/>
            <person name="Di Palma S."/>
            <person name="Preisinger C."/>
            <person name="Peng M."/>
            <person name="Polat A.N."/>
            <person name="Heck A.J."/>
            <person name="Mohammed S."/>
        </authorList>
    </citation>
    <scope>PHOSPHORYLATION [LARGE SCALE ANALYSIS] AT SER-43; SER-52 AND SER-113</scope>
    <scope>IDENTIFICATION BY MASS SPECTROMETRY [LARGE SCALE ANALYSIS]</scope>
    <source>
        <tissue>Cervix carcinoma</tissue>
        <tissue>Erythroleukemia</tissue>
    </source>
</reference>
<reference key="15">
    <citation type="journal article" date="2014" name="J. Proteomics">
        <title>An enzyme assisted RP-RPLC approach for in-depth analysis of human liver phosphoproteome.</title>
        <authorList>
            <person name="Bian Y."/>
            <person name="Song C."/>
            <person name="Cheng K."/>
            <person name="Dong M."/>
            <person name="Wang F."/>
            <person name="Huang J."/>
            <person name="Sun D."/>
            <person name="Wang L."/>
            <person name="Ye M."/>
            <person name="Zou H."/>
        </authorList>
    </citation>
    <scope>IDENTIFICATION BY MASS SPECTROMETRY [LARGE SCALE ANALYSIS]</scope>
    <source>
        <tissue>Liver</tissue>
    </source>
</reference>
<reference key="16">
    <citation type="journal article" date="2014" name="Nat. Struct. Mol. Biol.">
        <title>Uncovering global SUMOylation signaling networks in a site-specific manner.</title>
        <authorList>
            <person name="Hendriks I.A."/>
            <person name="D'Souza R.C."/>
            <person name="Yang B."/>
            <person name="Verlaan-de Vries M."/>
            <person name="Mann M."/>
            <person name="Vertegaal A.C."/>
        </authorList>
    </citation>
    <scope>SUMOYLATION [LARGE SCALE ANALYSIS] AT LYS-220 AND LYS-304</scope>
    <scope>IDENTIFICATION BY MASS SPECTROMETRY [LARGE SCALE ANALYSIS]</scope>
</reference>
<reference key="17">
    <citation type="journal article" date="2015" name="Cell Rep.">
        <title>SUMO-2 orchestrates chromatin modifiers in response to DNA damage.</title>
        <authorList>
            <person name="Hendriks I.A."/>
            <person name="Treffers L.W."/>
            <person name="Verlaan-de Vries M."/>
            <person name="Olsen J.V."/>
            <person name="Vertegaal A.C."/>
        </authorList>
    </citation>
    <scope>SUMOYLATION [LARGE SCALE ANALYSIS] AT LYS-304</scope>
    <scope>IDENTIFICATION BY MASS SPECTROMETRY [LARGE SCALE ANALYSIS]</scope>
</reference>
<reference key="18">
    <citation type="journal article" date="2017" name="Nat. Struct. Mol. Biol.">
        <title>Site-specific mapping of the human SUMO proteome reveals co-modification with phosphorylation.</title>
        <authorList>
            <person name="Hendriks I.A."/>
            <person name="Lyon D."/>
            <person name="Young C."/>
            <person name="Jensen L.J."/>
            <person name="Vertegaal A.C."/>
            <person name="Nielsen M.L."/>
        </authorList>
    </citation>
    <scope>SUMOYLATION [LARGE SCALE ANALYSIS] AT LYS-95; LYS-220; LYS-304 AND LYS-305</scope>
    <scope>IDENTIFICATION BY MASS SPECTROMETRY [LARGE SCALE ANALYSIS]</scope>
</reference>
<keyword id="KW-0025">Alternative splicing</keyword>
<keyword id="KW-1017">Isopeptide bond</keyword>
<keyword id="KW-0539">Nucleus</keyword>
<keyword id="KW-0597">Phosphoprotein</keyword>
<keyword id="KW-1267">Proteomics identification</keyword>
<keyword id="KW-1185">Reference proteome</keyword>
<keyword id="KW-0678">Repressor</keyword>
<keyword id="KW-0804">Transcription</keyword>
<keyword id="KW-0805">Transcription regulation</keyword>
<keyword id="KW-0832">Ubl conjugation</keyword>
<dbReference type="EMBL" id="AF450482">
    <property type="protein sequence ID" value="AAL47177.1"/>
    <property type="molecule type" value="mRNA"/>
</dbReference>
<dbReference type="EMBL" id="AY082382">
    <property type="protein sequence ID" value="AAL92491.1"/>
    <property type="molecule type" value="mRNA"/>
</dbReference>
<dbReference type="EMBL" id="AF087869">
    <property type="protein sequence ID" value="AAM10497.1"/>
    <property type="molecule type" value="mRNA"/>
</dbReference>
<dbReference type="EMBL" id="AF119664">
    <property type="protein sequence ID" value="AAF17221.1"/>
    <property type="molecule type" value="mRNA"/>
</dbReference>
<dbReference type="EMBL" id="AK002202">
    <property type="protein sequence ID" value="BAG51029.1"/>
    <property type="molecule type" value="mRNA"/>
</dbReference>
<dbReference type="EMBL" id="AK095265">
    <property type="protein sequence ID" value="BAC04514.1"/>
    <property type="molecule type" value="mRNA"/>
</dbReference>
<dbReference type="EMBL" id="CH471099">
    <property type="protein sequence ID" value="EAW89298.1"/>
    <property type="molecule type" value="Genomic_DNA"/>
</dbReference>
<dbReference type="EMBL" id="BC007592">
    <property type="protein sequence ID" value="AAH07592.1"/>
    <property type="molecule type" value="mRNA"/>
</dbReference>
<dbReference type="EMBL" id="BC013409">
    <property type="protein sequence ID" value="AAH13409.2"/>
    <property type="molecule type" value="mRNA"/>
</dbReference>
<dbReference type="EMBL" id="BC030233">
    <property type="protein sequence ID" value="AAH30233.1"/>
    <property type="molecule type" value="mRNA"/>
</dbReference>
<dbReference type="EMBL" id="BC063793">
    <property type="protein sequence ID" value="AAH63793.1"/>
    <property type="molecule type" value="mRNA"/>
</dbReference>
<dbReference type="CCDS" id="CCDS11726.1">
    <molecule id="Q9UHR5-1"/>
</dbReference>
<dbReference type="CCDS" id="CCDS77115.1">
    <molecule id="Q9UHR5-2"/>
</dbReference>
<dbReference type="RefSeq" id="NP_001288768.1">
    <molecule id="Q9UHR5-2"/>
    <property type="nucleotide sequence ID" value="NM_001301839.2"/>
</dbReference>
<dbReference type="RefSeq" id="NP_001288784.1">
    <property type="nucleotide sequence ID" value="NM_001301855.1"/>
</dbReference>
<dbReference type="RefSeq" id="NP_037392.1">
    <molecule id="Q9UHR5-1"/>
    <property type="nucleotide sequence ID" value="NM_013260.8"/>
</dbReference>
<dbReference type="BioGRID" id="118881">
    <property type="interactions" value="111"/>
</dbReference>
<dbReference type="CORUM" id="Q9UHR5"/>
<dbReference type="FunCoup" id="Q9UHR5">
    <property type="interactions" value="3114"/>
</dbReference>
<dbReference type="IntAct" id="Q9UHR5">
    <property type="interactions" value="50"/>
</dbReference>
<dbReference type="MINT" id="Q9UHR5"/>
<dbReference type="STRING" id="9606.ENSP00000462116"/>
<dbReference type="GlyCosmos" id="Q9UHR5">
    <property type="glycosylation" value="20 sites, 2 glycans"/>
</dbReference>
<dbReference type="GlyGen" id="Q9UHR5">
    <property type="glycosylation" value="24 sites, 2 O-linked glycans (24 sites)"/>
</dbReference>
<dbReference type="iPTMnet" id="Q9UHR5"/>
<dbReference type="PhosphoSitePlus" id="Q9UHR5"/>
<dbReference type="BioMuta" id="SAP30BP"/>
<dbReference type="DMDM" id="74761958"/>
<dbReference type="jPOST" id="Q9UHR5"/>
<dbReference type="MassIVE" id="Q9UHR5"/>
<dbReference type="PaxDb" id="9606-ENSP00000462116"/>
<dbReference type="PeptideAtlas" id="Q9UHR5"/>
<dbReference type="ProteomicsDB" id="84403">
    <molecule id="Q9UHR5-1"/>
</dbReference>
<dbReference type="ProteomicsDB" id="84404">
    <molecule id="Q9UHR5-2"/>
</dbReference>
<dbReference type="Pumba" id="Q9UHR5"/>
<dbReference type="Antibodypedia" id="19600">
    <property type="antibodies" value="286 antibodies from 27 providers"/>
</dbReference>
<dbReference type="DNASU" id="29115"/>
<dbReference type="Ensembl" id="ENST00000355423.7">
    <molecule id="Q9UHR5-2"/>
    <property type="protein sequence ID" value="ENSP00000347592.3"/>
    <property type="gene ID" value="ENSG00000161526.15"/>
</dbReference>
<dbReference type="Ensembl" id="ENST00000584667.6">
    <molecule id="Q9UHR5-1"/>
    <property type="protein sequence ID" value="ENSP00000462116.1"/>
    <property type="gene ID" value="ENSG00000161526.15"/>
</dbReference>
<dbReference type="GeneID" id="29115"/>
<dbReference type="KEGG" id="hsa:29115"/>
<dbReference type="MANE-Select" id="ENST00000584667.6">
    <property type="protein sequence ID" value="ENSP00000462116.1"/>
    <property type="RefSeq nucleotide sequence ID" value="NM_013260.8"/>
    <property type="RefSeq protein sequence ID" value="NP_037392.1"/>
</dbReference>
<dbReference type="UCSC" id="uc002jpe.4">
    <molecule id="Q9UHR5-1"/>
    <property type="organism name" value="human"/>
</dbReference>
<dbReference type="AGR" id="HGNC:30785"/>
<dbReference type="CTD" id="29115"/>
<dbReference type="DisGeNET" id="29115"/>
<dbReference type="GeneCards" id="SAP30BP"/>
<dbReference type="HGNC" id="HGNC:30785">
    <property type="gene designation" value="SAP30BP"/>
</dbReference>
<dbReference type="HPA" id="ENSG00000161526">
    <property type="expression patterns" value="Low tissue specificity"/>
</dbReference>
<dbReference type="MIM" id="610218">
    <property type="type" value="gene"/>
</dbReference>
<dbReference type="neXtProt" id="NX_Q9UHR5"/>
<dbReference type="OpenTargets" id="ENSG00000161526"/>
<dbReference type="PharmGKB" id="PA142670955"/>
<dbReference type="VEuPathDB" id="HostDB:ENSG00000161526"/>
<dbReference type="eggNOG" id="KOG2959">
    <property type="taxonomic scope" value="Eukaryota"/>
</dbReference>
<dbReference type="GeneTree" id="ENSGT00390000007870"/>
<dbReference type="HOGENOM" id="CLU_053268_0_1_1"/>
<dbReference type="InParanoid" id="Q9UHR5"/>
<dbReference type="OMA" id="XSFSERV"/>
<dbReference type="OrthoDB" id="1714508at2759"/>
<dbReference type="PAN-GO" id="Q9UHR5">
    <property type="GO annotations" value="1 GO annotation based on evolutionary models"/>
</dbReference>
<dbReference type="PhylomeDB" id="Q9UHR5"/>
<dbReference type="TreeFam" id="TF323387"/>
<dbReference type="PathwayCommons" id="Q9UHR5"/>
<dbReference type="Reactome" id="R-HSA-427413">
    <property type="pathway name" value="NoRC negatively regulates rRNA expression"/>
</dbReference>
<dbReference type="SignaLink" id="Q9UHR5"/>
<dbReference type="BioGRID-ORCS" id="29115">
    <property type="hits" value="770 hits in 1164 CRISPR screens"/>
</dbReference>
<dbReference type="ChiTaRS" id="SAP30BP">
    <property type="organism name" value="human"/>
</dbReference>
<dbReference type="GenomeRNAi" id="29115"/>
<dbReference type="Pharos" id="Q9UHR5">
    <property type="development level" value="Tbio"/>
</dbReference>
<dbReference type="PRO" id="PR:Q9UHR5"/>
<dbReference type="Proteomes" id="UP000005640">
    <property type="component" value="Chromosome 17"/>
</dbReference>
<dbReference type="RNAct" id="Q9UHR5">
    <property type="molecule type" value="protein"/>
</dbReference>
<dbReference type="Bgee" id="ENSG00000161526">
    <property type="expression patterns" value="Expressed in sural nerve and 200 other cell types or tissues"/>
</dbReference>
<dbReference type="ExpressionAtlas" id="Q9UHR5">
    <property type="expression patterns" value="baseline and differential"/>
</dbReference>
<dbReference type="GO" id="GO:0045111">
    <property type="term" value="C:intermediate filament cytoskeleton"/>
    <property type="evidence" value="ECO:0000314"/>
    <property type="project" value="HPA"/>
</dbReference>
<dbReference type="GO" id="GO:0005654">
    <property type="term" value="C:nucleoplasm"/>
    <property type="evidence" value="ECO:0000314"/>
    <property type="project" value="HPA"/>
</dbReference>
<dbReference type="GO" id="GO:0005634">
    <property type="term" value="C:nucleus"/>
    <property type="evidence" value="ECO:0000314"/>
    <property type="project" value="UniProtKB"/>
</dbReference>
<dbReference type="GO" id="GO:0006355">
    <property type="term" value="P:regulation of DNA-templated transcription"/>
    <property type="evidence" value="ECO:0007669"/>
    <property type="project" value="InterPro"/>
</dbReference>
<dbReference type="GO" id="GO:0009615">
    <property type="term" value="P:response to virus"/>
    <property type="evidence" value="ECO:0000270"/>
    <property type="project" value="UniProtKB"/>
</dbReference>
<dbReference type="InterPro" id="IPR012479">
    <property type="entry name" value="SAP30BP"/>
</dbReference>
<dbReference type="PANTHER" id="PTHR13464:SF0">
    <property type="entry name" value="SAP30-BINDING PROTEIN"/>
    <property type="match status" value="1"/>
</dbReference>
<dbReference type="PANTHER" id="PTHR13464">
    <property type="entry name" value="TRANSCRIPTIONAL REGULATOR PROTEIN HCNGP"/>
    <property type="match status" value="1"/>
</dbReference>
<dbReference type="Pfam" id="PF07818">
    <property type="entry name" value="HCNGP"/>
    <property type="match status" value="1"/>
</dbReference>
<sequence>MAGKKNVLSSLAVYAEDSEPESDGEAGIEAVGSAAEEKGGLVSDAYGEDDFSRLGGDEDGYEEEEDENSRQSEDDDSETEKPEADDPKDNTEAEKRDPQELVASFSERVRNMSPDEIKIPPEPPGRCSNHLQDKIQKLYERKIKEGMDMNYIIQRKKEFRNPSIYEKLIQFCAIDELGTNYPKDMFDPHGWSEDSYYEALAKAQKIEMDKLEKAKKERTKIEFVTGTKKGTTTNATSTTTTTASTAVADAQKRKSKWDSAIPVTTIAQPTILTTTATLPAVVTVTTSASGSKTTVISAVGTIVKKAKQ</sequence>
<accession>Q9UHR5</accession>
<accession>B3KML7</accession>
<accession>Q8N1R5</accession>
<accession>Q8TDR8</accession>
<accession>Q96D27</accession>
<comment type="function">
    <text evidence="1 6">Plays a role in transcriptional repression by promoting histone deacetylase activity, leading to deacetylation of histone H3 (PubMed:21221920). May be involved in the regulation of beta-2-microglobulin genes (By similarity).</text>
</comment>
<comment type="function">
    <text evidence="6">(Microbial infection) Involved in transcriptional repression of HHV-1 genes TK and gC.</text>
</comment>
<comment type="subunit">
    <text evidence="5">Interacts with histone deacetylase complex subunit SAP30.</text>
</comment>
<comment type="interaction">
    <interactant intactId="EBI-751683">
        <id>Q9UHR5</id>
    </interactant>
    <interactant intactId="EBI-2836773">
        <id>Q9UK58</id>
        <label>CCNL1</label>
    </interactant>
    <organismsDiffer>false</organismsDiffer>
    <experiments>5</experiments>
</comment>
<comment type="interaction">
    <interactant intactId="EBI-751683">
        <id>Q9UHR5</id>
    </interactant>
    <interactant intactId="EBI-741101">
        <id>Q13643</id>
        <label>FHL3</label>
    </interactant>
    <organismsDiffer>false</organismsDiffer>
    <experiments>6</experiments>
</comment>
<comment type="interaction">
    <interactant intactId="EBI-751683">
        <id>Q9UHR5</id>
    </interactant>
    <interactant intactId="EBI-618309">
        <id>Q08379</id>
        <label>GOLGA2</label>
    </interactant>
    <organismsDiffer>false</organismsDiffer>
    <experiments>3</experiments>
</comment>
<comment type="interaction">
    <interactant intactId="EBI-751683">
        <id>Q9UHR5</id>
    </interactant>
    <interactant intactId="EBI-11536584">
        <id>O15294-3</id>
        <label>OGT</label>
    </interactant>
    <organismsDiffer>false</organismsDiffer>
    <experiments>3</experiments>
</comment>
<comment type="interaction">
    <interactant intactId="EBI-751683">
        <id>Q9UHR5</id>
    </interactant>
    <interactant intactId="EBI-2805516">
        <id>P31321</id>
        <label>PRKAR1B</label>
    </interactant>
    <organismsDiffer>false</organismsDiffer>
    <experiments>3</experiments>
</comment>
<comment type="interaction">
    <interactant intactId="EBI-751683">
        <id>Q9UHR5</id>
    </interactant>
    <interactant intactId="EBI-1053259">
        <id>Q9UHX1</id>
        <label>PUF60</label>
    </interactant>
    <organismsDiffer>false</organismsDiffer>
    <experiments>10</experiments>
</comment>
<comment type="interaction">
    <interactant intactId="EBI-751683">
        <id>Q9UHR5</id>
    </interactant>
    <interactant intactId="EBI-1105213">
        <id>Q9UBB9</id>
        <label>TFIP11</label>
    </interactant>
    <organismsDiffer>false</organismsDiffer>
    <experiments>4</experiments>
</comment>
<comment type="interaction">
    <interactant intactId="EBI-751683">
        <id>Q9UHR5</id>
    </interactant>
    <interactant intactId="EBI-741515">
        <id>Q9NVV9</id>
        <label>THAP1</label>
    </interactant>
    <organismsDiffer>false</organismsDiffer>
    <experiments>3</experiments>
</comment>
<comment type="subcellular location">
    <subcellularLocation>
        <location evidence="5">Nucleus</location>
    </subcellularLocation>
</comment>
<comment type="alternative products">
    <event type="alternative splicing"/>
    <isoform>
        <id>Q9UHR5-1</id>
        <name evidence="5">1</name>
        <sequence type="displayed"/>
    </isoform>
    <isoform>
        <id>Q9UHR5-2</id>
        <name evidence="4">2</name>
        <sequence type="described" ref="VSP_052091"/>
    </isoform>
</comment>
<comment type="induction">
    <text evidence="5">(Microbial infection) In fibroblasts by binding of HSV1.</text>
</comment>
<comment type="similarity">
    <text evidence="2">Belongs to the HCNGP family.</text>
</comment>
<gene>
    <name evidence="11" type="primary">SAP30BP</name>
    <name evidence="1" type="synonym">HCNGP</name>
    <name evidence="15" type="synonym">HTRG</name>
    <name evidence="8" type="synonym">HTRP</name>
</gene>
<organism>
    <name type="scientific">Homo sapiens</name>
    <name type="common">Human</name>
    <dbReference type="NCBI Taxonomy" id="9606"/>
    <lineage>
        <taxon>Eukaryota</taxon>
        <taxon>Metazoa</taxon>
        <taxon>Chordata</taxon>
        <taxon>Craniata</taxon>
        <taxon>Vertebrata</taxon>
        <taxon>Euteleostomi</taxon>
        <taxon>Mammalia</taxon>
        <taxon>Eutheria</taxon>
        <taxon>Euarchontoglires</taxon>
        <taxon>Primates</taxon>
        <taxon>Haplorrhini</taxon>
        <taxon>Catarrhini</taxon>
        <taxon>Hominidae</taxon>
        <taxon>Homo</taxon>
    </lineage>
</organism>
<protein>
    <recommendedName>
        <fullName>SAP30-binding protein</fullName>
    </recommendedName>
    <alternativeName>
        <fullName>Transcriptional regulator protein HCNGP</fullName>
    </alternativeName>
</protein>
<proteinExistence type="evidence at protein level"/>